<dbReference type="EC" id="3.4.21.-"/>
<dbReference type="EMBL" id="AC134504">
    <property type="status" value="NOT_ANNOTATED_CDS"/>
    <property type="molecule type" value="Genomic_DNA"/>
</dbReference>
<dbReference type="RefSeq" id="NP_001192200.1">
    <property type="nucleotide sequence ID" value="NM_001205271.1"/>
</dbReference>
<dbReference type="SMR" id="E5RG02"/>
<dbReference type="BioGRID" id="939023">
    <property type="interactions" value="1"/>
</dbReference>
<dbReference type="FunCoup" id="E5RG02">
    <property type="interactions" value="15"/>
</dbReference>
<dbReference type="IntAct" id="E5RG02">
    <property type="interactions" value="1"/>
</dbReference>
<dbReference type="MEROPS" id="S01.394"/>
<dbReference type="BioMuta" id="PRSS46"/>
<dbReference type="MassIVE" id="E5RG02"/>
<dbReference type="PaxDb" id="9606-ENSP00000430307"/>
<dbReference type="PeptideAtlas" id="E5RG02"/>
<dbReference type="UCSC" id="uc021wxf.2">
    <property type="organism name" value="human"/>
</dbReference>
<dbReference type="AGR" id="HGNC:37325"/>
<dbReference type="GeneCards" id="PRSS46P"/>
<dbReference type="HGNC" id="HGNC:37325">
    <property type="gene designation" value="PRSS46P"/>
</dbReference>
<dbReference type="neXtProt" id="NX_E5RG02"/>
<dbReference type="eggNOG" id="KOG3627">
    <property type="taxonomic scope" value="Eukaryota"/>
</dbReference>
<dbReference type="HOGENOM" id="CLU_006842_1_7_1"/>
<dbReference type="InParanoid" id="E5RG02"/>
<dbReference type="PAN-GO" id="E5RG02">
    <property type="GO annotations" value="3 GO annotations based on evolutionary models"/>
</dbReference>
<dbReference type="PhylomeDB" id="E5RG02"/>
<dbReference type="PathwayCommons" id="E5RG02"/>
<dbReference type="BioGRID-ORCS" id="100287362">
    <property type="hits" value="11 hits in 1132 CRISPR screens"/>
</dbReference>
<dbReference type="GenomeRNAi" id="100287362"/>
<dbReference type="Pharos" id="E5RG02">
    <property type="development level" value="Tdark"/>
</dbReference>
<dbReference type="PRO" id="PR:E5RG02"/>
<dbReference type="Proteomes" id="UP000005640">
    <property type="component" value="Unplaced"/>
</dbReference>
<dbReference type="RNAct" id="E5RG02">
    <property type="molecule type" value="protein"/>
</dbReference>
<dbReference type="GO" id="GO:0004252">
    <property type="term" value="F:serine-type endopeptidase activity"/>
    <property type="evidence" value="ECO:0007669"/>
    <property type="project" value="InterPro"/>
</dbReference>
<dbReference type="GO" id="GO:0006508">
    <property type="term" value="P:proteolysis"/>
    <property type="evidence" value="ECO:0007669"/>
    <property type="project" value="UniProtKB-KW"/>
</dbReference>
<dbReference type="CDD" id="cd00190">
    <property type="entry name" value="Tryp_SPc"/>
    <property type="match status" value="1"/>
</dbReference>
<dbReference type="FunFam" id="2.40.10.10:FF:000073">
    <property type="entry name" value="Trypsin alpha"/>
    <property type="match status" value="1"/>
</dbReference>
<dbReference type="Gene3D" id="2.40.10.10">
    <property type="entry name" value="Trypsin-like serine proteases"/>
    <property type="match status" value="1"/>
</dbReference>
<dbReference type="InterPro" id="IPR009003">
    <property type="entry name" value="Peptidase_S1_PA"/>
</dbReference>
<dbReference type="InterPro" id="IPR043504">
    <property type="entry name" value="Peptidase_S1_PA_chymotrypsin"/>
</dbReference>
<dbReference type="InterPro" id="IPR001314">
    <property type="entry name" value="Peptidase_S1A"/>
</dbReference>
<dbReference type="InterPro" id="IPR001254">
    <property type="entry name" value="Trypsin_dom"/>
</dbReference>
<dbReference type="InterPro" id="IPR018114">
    <property type="entry name" value="TRYPSIN_HIS"/>
</dbReference>
<dbReference type="PANTHER" id="PTHR24252:SF8">
    <property type="entry name" value="ACROSIN"/>
    <property type="match status" value="1"/>
</dbReference>
<dbReference type="PANTHER" id="PTHR24252">
    <property type="entry name" value="ACROSIN-RELATED"/>
    <property type="match status" value="1"/>
</dbReference>
<dbReference type="Pfam" id="PF00089">
    <property type="entry name" value="Trypsin"/>
    <property type="match status" value="1"/>
</dbReference>
<dbReference type="PRINTS" id="PR00722">
    <property type="entry name" value="CHYMOTRYPSIN"/>
</dbReference>
<dbReference type="SMART" id="SM00020">
    <property type="entry name" value="Tryp_SPc"/>
    <property type="match status" value="1"/>
</dbReference>
<dbReference type="SUPFAM" id="SSF50494">
    <property type="entry name" value="Trypsin-like serine proteases"/>
    <property type="match status" value="1"/>
</dbReference>
<dbReference type="PROSITE" id="PS50240">
    <property type="entry name" value="TRYPSIN_DOM"/>
    <property type="match status" value="1"/>
</dbReference>
<dbReference type="PROSITE" id="PS00134">
    <property type="entry name" value="TRYPSIN_HIS"/>
    <property type="match status" value="1"/>
</dbReference>
<accession>E5RG02</accession>
<organism>
    <name type="scientific">Homo sapiens</name>
    <name type="common">Human</name>
    <dbReference type="NCBI Taxonomy" id="9606"/>
    <lineage>
        <taxon>Eukaryota</taxon>
        <taxon>Metazoa</taxon>
        <taxon>Chordata</taxon>
        <taxon>Craniata</taxon>
        <taxon>Vertebrata</taxon>
        <taxon>Euteleostomi</taxon>
        <taxon>Mammalia</taxon>
        <taxon>Eutheria</taxon>
        <taxon>Euarchontoglires</taxon>
        <taxon>Primates</taxon>
        <taxon>Haplorrhini</taxon>
        <taxon>Catarrhini</taxon>
        <taxon>Hominidae</taxon>
        <taxon>Homo</taxon>
    </lineage>
</organism>
<comment type="similarity">
    <text evidence="2">Belongs to the peptidase S1 family.</text>
</comment>
<keyword id="KW-1015">Disulfide bond</keyword>
<keyword id="KW-0378">Hydrolase</keyword>
<keyword id="KW-0645">Protease</keyword>
<keyword id="KW-1185">Reference proteome</keyword>
<keyword id="KW-0720">Serine protease</keyword>
<protein>
    <recommendedName>
        <fullName>Putative serine protease 46</fullName>
        <ecNumber>3.4.21.-</ecNumber>
    </recommendedName>
    <alternativeName>
        <fullName evidence="3">Serine protease 46 pseudogene</fullName>
    </alternativeName>
</protein>
<name>PRS46_HUMAN</name>
<reference key="1">
    <citation type="journal article" date="2006" name="Nature">
        <title>The DNA sequence, annotation and analysis of human chromosome 3.</title>
        <authorList>
            <person name="Muzny D.M."/>
            <person name="Scherer S.E."/>
            <person name="Kaul R."/>
            <person name="Wang J."/>
            <person name="Yu J."/>
            <person name="Sudbrak R."/>
            <person name="Buhay C.J."/>
            <person name="Chen R."/>
            <person name="Cree A."/>
            <person name="Ding Y."/>
            <person name="Dugan-Rocha S."/>
            <person name="Gill R."/>
            <person name="Gunaratne P."/>
            <person name="Harris R.A."/>
            <person name="Hawes A.C."/>
            <person name="Hernandez J."/>
            <person name="Hodgson A.V."/>
            <person name="Hume J."/>
            <person name="Jackson A."/>
            <person name="Khan Z.M."/>
            <person name="Kovar-Smith C."/>
            <person name="Lewis L.R."/>
            <person name="Lozado R.J."/>
            <person name="Metzker M.L."/>
            <person name="Milosavljevic A."/>
            <person name="Miner G.R."/>
            <person name="Morgan M.B."/>
            <person name="Nazareth L.V."/>
            <person name="Scott G."/>
            <person name="Sodergren E."/>
            <person name="Song X.-Z."/>
            <person name="Steffen D."/>
            <person name="Wei S."/>
            <person name="Wheeler D.A."/>
            <person name="Wright M.W."/>
            <person name="Worley K.C."/>
            <person name="Yuan Y."/>
            <person name="Zhang Z."/>
            <person name="Adams C.Q."/>
            <person name="Ansari-Lari M.A."/>
            <person name="Ayele M."/>
            <person name="Brown M.J."/>
            <person name="Chen G."/>
            <person name="Chen Z."/>
            <person name="Clendenning J."/>
            <person name="Clerc-Blankenburg K.P."/>
            <person name="Chen R."/>
            <person name="Chen Z."/>
            <person name="Davis C."/>
            <person name="Delgado O."/>
            <person name="Dinh H.H."/>
            <person name="Dong W."/>
            <person name="Draper H."/>
            <person name="Ernst S."/>
            <person name="Fu G."/>
            <person name="Gonzalez-Garay M.L."/>
            <person name="Garcia D.K."/>
            <person name="Gillett W."/>
            <person name="Gu J."/>
            <person name="Hao B."/>
            <person name="Haugen E."/>
            <person name="Havlak P."/>
            <person name="He X."/>
            <person name="Hennig S."/>
            <person name="Hu S."/>
            <person name="Huang W."/>
            <person name="Jackson L.R."/>
            <person name="Jacob L.S."/>
            <person name="Kelly S.H."/>
            <person name="Kube M."/>
            <person name="Levy R."/>
            <person name="Li Z."/>
            <person name="Liu B."/>
            <person name="Liu J."/>
            <person name="Liu W."/>
            <person name="Lu J."/>
            <person name="Maheshwari M."/>
            <person name="Nguyen B.-V."/>
            <person name="Okwuonu G.O."/>
            <person name="Palmeiri A."/>
            <person name="Pasternak S."/>
            <person name="Perez L.M."/>
            <person name="Phelps K.A."/>
            <person name="Plopper F.J."/>
            <person name="Qiang B."/>
            <person name="Raymond C."/>
            <person name="Rodriguez R."/>
            <person name="Saenphimmachak C."/>
            <person name="Santibanez J."/>
            <person name="Shen H."/>
            <person name="Shen Y."/>
            <person name="Subramanian S."/>
            <person name="Tabor P.E."/>
            <person name="Verduzco D."/>
            <person name="Waldron L."/>
            <person name="Wang J."/>
            <person name="Wang J."/>
            <person name="Wang Q."/>
            <person name="Williams G.A."/>
            <person name="Wong G.K.-S."/>
            <person name="Yao Z."/>
            <person name="Zhang J."/>
            <person name="Zhang X."/>
            <person name="Zhao G."/>
            <person name="Zhou J."/>
            <person name="Zhou Y."/>
            <person name="Nelson D."/>
            <person name="Lehrach H."/>
            <person name="Reinhardt R."/>
            <person name="Naylor S.L."/>
            <person name="Yang H."/>
            <person name="Olson M."/>
            <person name="Weinstock G."/>
            <person name="Gibbs R.A."/>
        </authorList>
    </citation>
    <scope>NUCLEOTIDE SEQUENCE [LARGE SCALE GENOMIC DNA]</scope>
</reference>
<sequence length="174" mass="19341">MACGPGDLQSLTSPLSSARLDYQPSIEGPWLRACGQTNVSCRVVKGKLVEVGKWPWQVSILFLGTYICSGSLIHHQWVLTAAHCLQRFKDLSLYSVMVGVHQRPENSTQLPLTRMVIHKDFSNLMSQDIALLKLRDSISWSPFVQPVCLPNIKFKPSIGSMCWVIGWGTTGKKG</sequence>
<feature type="chain" id="PRO_0000418332" description="Putative serine protease 46">
    <location>
        <begin position="1"/>
        <end position="174"/>
    </location>
</feature>
<feature type="domain" description="Peptidase S1" evidence="2">
    <location>
        <begin position="43"/>
        <end position="174"/>
    </location>
</feature>
<feature type="active site" description="Charge relay system" evidence="1">
    <location>
        <position position="83"/>
    </location>
</feature>
<feature type="active site" description="Charge relay system" evidence="1">
    <location>
        <position position="128"/>
    </location>
</feature>
<feature type="disulfide bond" evidence="2">
    <location>
        <begin position="68"/>
        <end position="84"/>
    </location>
</feature>
<gene>
    <name evidence="3" type="primary">PRSS46P</name>
    <name type="synonym">PRSS46</name>
</gene>
<proteinExistence type="inferred from homology"/>
<evidence type="ECO:0000250" key="1"/>
<evidence type="ECO:0000255" key="2">
    <source>
        <dbReference type="PROSITE-ProRule" id="PRU00274"/>
    </source>
</evidence>
<evidence type="ECO:0000312" key="3">
    <source>
        <dbReference type="HGNC" id="HGNC:37325"/>
    </source>
</evidence>